<proteinExistence type="inferred from homology"/>
<reference key="1">
    <citation type="journal article" date="2004" name="Proc. Natl. Acad. Sci. U.S.A.">
        <title>Complete genomes of two clinical Staphylococcus aureus strains: evidence for the rapid evolution of virulence and drug resistance.</title>
        <authorList>
            <person name="Holden M.T.G."/>
            <person name="Feil E.J."/>
            <person name="Lindsay J.A."/>
            <person name="Peacock S.J."/>
            <person name="Day N.P.J."/>
            <person name="Enright M.C."/>
            <person name="Foster T.J."/>
            <person name="Moore C.E."/>
            <person name="Hurst L."/>
            <person name="Atkin R."/>
            <person name="Barron A."/>
            <person name="Bason N."/>
            <person name="Bentley S.D."/>
            <person name="Chillingworth C."/>
            <person name="Chillingworth T."/>
            <person name="Churcher C."/>
            <person name="Clark L."/>
            <person name="Corton C."/>
            <person name="Cronin A."/>
            <person name="Doggett J."/>
            <person name="Dowd L."/>
            <person name="Feltwell T."/>
            <person name="Hance Z."/>
            <person name="Harris B."/>
            <person name="Hauser H."/>
            <person name="Holroyd S."/>
            <person name="Jagels K."/>
            <person name="James K.D."/>
            <person name="Lennard N."/>
            <person name="Line A."/>
            <person name="Mayes R."/>
            <person name="Moule S."/>
            <person name="Mungall K."/>
            <person name="Ormond D."/>
            <person name="Quail M.A."/>
            <person name="Rabbinowitsch E."/>
            <person name="Rutherford K.M."/>
            <person name="Sanders M."/>
            <person name="Sharp S."/>
            <person name="Simmonds M."/>
            <person name="Stevens K."/>
            <person name="Whitehead S."/>
            <person name="Barrell B.G."/>
            <person name="Spratt B.G."/>
            <person name="Parkhill J."/>
        </authorList>
    </citation>
    <scope>NUCLEOTIDE SEQUENCE [LARGE SCALE GENOMIC DNA]</scope>
    <source>
        <strain>MRSA252</strain>
    </source>
</reference>
<feature type="signal peptide" evidence="3">
    <location>
        <begin position="1"/>
        <end position="28"/>
    </location>
</feature>
<feature type="chain" id="PRO_0000019448" description="Iron-regulated surface determinant protein C">
    <location>
        <begin position="29"/>
        <end position="192"/>
    </location>
</feature>
<feature type="propeptide" id="PRO_0000019449" description="Removed by sortase B" evidence="2">
    <location>
        <begin position="193"/>
        <end position="227"/>
    </location>
</feature>
<feature type="domain" description="NEAT" evidence="4">
    <location>
        <begin position="29"/>
        <end position="150"/>
    </location>
</feature>
<feature type="region of interest" description="Disordered" evidence="5">
    <location>
        <begin position="149"/>
        <end position="191"/>
    </location>
</feature>
<feature type="short sequence motif" description="NPQTN sorting signal" evidence="2">
    <location>
        <begin position="189"/>
        <end position="193"/>
    </location>
</feature>
<feature type="compositionally biased region" description="Low complexity" evidence="5">
    <location>
        <begin position="161"/>
        <end position="172"/>
    </location>
</feature>
<feature type="compositionally biased region" description="Polar residues" evidence="5">
    <location>
        <begin position="173"/>
        <end position="182"/>
    </location>
</feature>
<feature type="binding site" evidence="2">
    <location>
        <position position="47"/>
    </location>
    <ligand>
        <name>heme</name>
        <dbReference type="ChEBI" id="CHEBI:30413"/>
    </ligand>
</feature>
<feature type="binding site" evidence="2">
    <location>
        <position position="48"/>
    </location>
    <ligand>
        <name>heme</name>
        <dbReference type="ChEBI" id="CHEBI:30413"/>
    </ligand>
</feature>
<feature type="binding site" description="axial binding residue" evidence="1">
    <location>
        <position position="132"/>
    </location>
    <ligand>
        <name>heme</name>
        <dbReference type="ChEBI" id="CHEBI:30413"/>
    </ligand>
    <ligandPart>
        <name>Fe</name>
        <dbReference type="ChEBI" id="CHEBI:18248"/>
    </ligandPart>
</feature>
<feature type="binding site" evidence="2">
    <location>
        <position position="136"/>
    </location>
    <ligand>
        <name>heme</name>
        <dbReference type="ChEBI" id="CHEBI:30413"/>
    </ligand>
</feature>
<feature type="modified residue" description="Pentaglycyl murein peptidoglycan amidated threonine" evidence="2">
    <location>
        <position position="192"/>
    </location>
</feature>
<accession>Q6GHV5</accession>
<organism>
    <name type="scientific">Staphylococcus aureus (strain MRSA252)</name>
    <dbReference type="NCBI Taxonomy" id="282458"/>
    <lineage>
        <taxon>Bacteria</taxon>
        <taxon>Bacillati</taxon>
        <taxon>Bacillota</taxon>
        <taxon>Bacilli</taxon>
        <taxon>Bacillales</taxon>
        <taxon>Staphylococcaceae</taxon>
        <taxon>Staphylococcus</taxon>
    </lineage>
</organism>
<protein>
    <recommendedName>
        <fullName>Iron-regulated surface determinant protein C</fullName>
    </recommendedName>
    <alternativeName>
        <fullName>Staphylococcal iron-regulated protein D</fullName>
    </alternativeName>
</protein>
<keyword id="KW-0134">Cell wall</keyword>
<keyword id="KW-0349">Heme</keyword>
<keyword id="KW-0408">Iron</keyword>
<keyword id="KW-0479">Metal-binding</keyword>
<keyword id="KW-0572">Peptidoglycan-anchor</keyword>
<keyword id="KW-0964">Secreted</keyword>
<keyword id="KW-0732">Signal</keyword>
<sequence length="227" mass="24897">MKNILKVFNTMILALIIIIATFSNTANAADSGTLNYEVYKYNTNDTSIANDYFNKPAKYIKKNGKLYVQITVNHSHWITGMSIEGHKERIISKNTAKDERTSEFEVSKLNGKIDGKIDVYIDEKVNGKPFKYDHHYNITYKFNGPSDVAGANAPGKDDKNSASGSDKGSDGATTGQSESNSSNKDKVENPQTNAGTPAYIYAIPVASLALLIAITLFVRKKSKGNVE</sequence>
<name>ISDC_STAAR</name>
<gene>
    <name type="primary">isdC</name>
    <name type="synonym">sirD</name>
    <name type="ordered locus">SAR1104</name>
</gene>
<dbReference type="EMBL" id="BX571856">
    <property type="protein sequence ID" value="CAG40106.1"/>
    <property type="molecule type" value="Genomic_DNA"/>
</dbReference>
<dbReference type="RefSeq" id="WP_000789812.1">
    <property type="nucleotide sequence ID" value="NC_002952.2"/>
</dbReference>
<dbReference type="SMR" id="Q6GHV5"/>
<dbReference type="KEGG" id="sar:SAR1104"/>
<dbReference type="HOGENOM" id="CLU_092243_1_0_9"/>
<dbReference type="Proteomes" id="UP000000596">
    <property type="component" value="Chromosome"/>
</dbReference>
<dbReference type="GO" id="GO:0005576">
    <property type="term" value="C:extracellular region"/>
    <property type="evidence" value="ECO:0007669"/>
    <property type="project" value="UniProtKB-KW"/>
</dbReference>
<dbReference type="GO" id="GO:0009274">
    <property type="term" value="C:peptidoglycan-based cell wall"/>
    <property type="evidence" value="ECO:0007669"/>
    <property type="project" value="InterPro"/>
</dbReference>
<dbReference type="GO" id="GO:0030492">
    <property type="term" value="F:hemoglobin binding"/>
    <property type="evidence" value="ECO:0007669"/>
    <property type="project" value="InterPro"/>
</dbReference>
<dbReference type="GO" id="GO:0046872">
    <property type="term" value="F:metal ion binding"/>
    <property type="evidence" value="ECO:0007669"/>
    <property type="project" value="UniProtKB-KW"/>
</dbReference>
<dbReference type="GO" id="GO:0015886">
    <property type="term" value="P:heme transport"/>
    <property type="evidence" value="ECO:0007669"/>
    <property type="project" value="InterPro"/>
</dbReference>
<dbReference type="CDD" id="cd06920">
    <property type="entry name" value="NEAT"/>
    <property type="match status" value="1"/>
</dbReference>
<dbReference type="Gene3D" id="2.60.40.1850">
    <property type="match status" value="1"/>
</dbReference>
<dbReference type="InterPro" id="IPR019909">
    <property type="entry name" value="Haem_uptake_protein_IsdC"/>
</dbReference>
<dbReference type="InterPro" id="IPR050436">
    <property type="entry name" value="IsdA"/>
</dbReference>
<dbReference type="InterPro" id="IPR006635">
    <property type="entry name" value="NEAT_dom"/>
</dbReference>
<dbReference type="InterPro" id="IPR037250">
    <property type="entry name" value="NEAT_dom_sf"/>
</dbReference>
<dbReference type="InterPro" id="IPR017505">
    <property type="entry name" value="Sortase_SrtB_sig_NPQTN"/>
</dbReference>
<dbReference type="NCBIfam" id="TIGR03656">
    <property type="entry name" value="IsdC"/>
    <property type="match status" value="1"/>
</dbReference>
<dbReference type="NCBIfam" id="TIGR03068">
    <property type="entry name" value="srtB_sig_NPQTN"/>
    <property type="match status" value="1"/>
</dbReference>
<dbReference type="PANTHER" id="PTHR37824">
    <property type="entry name" value="IRON-REGULATED SURFACE DETERMINANT PROTEIN C"/>
    <property type="match status" value="1"/>
</dbReference>
<dbReference type="PANTHER" id="PTHR37824:SF1">
    <property type="entry name" value="IRON-REGULATED SURFACE DETERMINANT PROTEIN C"/>
    <property type="match status" value="1"/>
</dbReference>
<dbReference type="Pfam" id="PF05031">
    <property type="entry name" value="NEAT"/>
    <property type="match status" value="1"/>
</dbReference>
<dbReference type="SMART" id="SM00725">
    <property type="entry name" value="NEAT"/>
    <property type="match status" value="1"/>
</dbReference>
<dbReference type="SUPFAM" id="SSF158911">
    <property type="entry name" value="NEAT domain-like"/>
    <property type="match status" value="1"/>
</dbReference>
<dbReference type="PROSITE" id="PS50978">
    <property type="entry name" value="NEAT"/>
    <property type="match status" value="1"/>
</dbReference>
<evidence type="ECO:0000250" key="1"/>
<evidence type="ECO:0000250" key="2">
    <source>
        <dbReference type="UniProtKB" id="Q8KQR1"/>
    </source>
</evidence>
<evidence type="ECO:0000255" key="3"/>
<evidence type="ECO:0000255" key="4">
    <source>
        <dbReference type="PROSITE-ProRule" id="PRU00337"/>
    </source>
</evidence>
<evidence type="ECO:0000256" key="5">
    <source>
        <dbReference type="SAM" id="MobiDB-lite"/>
    </source>
</evidence>
<evidence type="ECO:0000305" key="6"/>
<comment type="function">
    <text evidence="1">Involved in heme (porphyrin) scavenging. Binds hemoglobin and almost exclusively free-base protoporphyrin IX. Probably has a role as the central conduit of the isd heme uptake system, i.e. mediates the transfer of the iron-containing nutrient from IsdABH to the membrane translocation system IsdDEF. Hemin-free IsdC (apo-IsdC) acquires hemin from hemin-containing IsdA (holo-IsdA) probably through the activated holo-IsdA-apo-IsdC complex and due to the higher affinity of apo-IsdC for the cofactor. The reaction is reversible (By similarity).</text>
</comment>
<comment type="subunit">
    <text evidence="1">Monomer. Interacts with IsdA (By similarity).</text>
</comment>
<comment type="subcellular location">
    <subcellularLocation>
        <location evidence="1">Secreted</location>
        <location evidence="1">Cell wall</location>
        <topology evidence="1">Peptidoglycan-anchor</topology>
    </subcellularLocation>
    <text evidence="2">Anchored to the cell wall by sortase B (By similarity).</text>
</comment>
<comment type="induction">
    <text evidence="1">Repressed by fur in the presence of iron.</text>
</comment>
<comment type="domain">
    <text evidence="1">The NEAT domain binds Fe(3+) heme iron. Reduction of the high-spin Fe(3+) heme iron to high-spin Fe(2+) results in loss of the heme from the binding site of the protein due to the absence of a proximal histidine (By similarity).</text>
</comment>
<comment type="similarity">
    <text evidence="6">Belongs to the IsdC family.</text>
</comment>